<reference key="1">
    <citation type="journal article" date="2001" name="Plant Physiol.">
        <title>Aquaporins constitute a large and highly divergent protein family in maize.</title>
        <authorList>
            <person name="Chaumont F."/>
            <person name="Barrieu F."/>
            <person name="Wojcik E."/>
            <person name="Chrispeels M.J."/>
            <person name="Jung R."/>
        </authorList>
    </citation>
    <scope>NUCLEOTIDE SEQUENCE [MRNA]</scope>
    <scope>GENE FAMILY</scope>
    <scope>NOMENCLATURE</scope>
    <source>
        <strain>cv. B73</strain>
    </source>
</reference>
<reference key="2">
    <citation type="submission" date="2006-04" db="EMBL/GenBank/DDBJ databases">
        <title>A silicon transporter in Zea mays.</title>
        <authorList>
            <person name="Hu H."/>
            <person name="Ye C."/>
            <person name="He W."/>
            <person name="Li Q."/>
        </authorList>
    </citation>
    <scope>NUCLEOTIDE SEQUENCE [MRNA]</scope>
</reference>
<comment type="function">
    <text evidence="1">Aquaporins facilitate the transport of water and small neutral solutes across cell membranes.</text>
</comment>
<comment type="subcellular location">
    <subcellularLocation>
        <location evidence="3">Membrane</location>
        <topology evidence="3">Multi-pass membrane protein</topology>
    </subcellularLocation>
</comment>
<comment type="domain">
    <text>Aquaporins contain two tandem repeats each containing three membrane-spanning domains and a pore-forming loop with the signature motif Asn-Pro-Ala (NPA).</text>
</comment>
<comment type="similarity">
    <text evidence="3">Belongs to the MIP/aquaporin (TC 1.A.8) family. NIP (TC 1.A.8.12) subfamily.</text>
</comment>
<organism>
    <name type="scientific">Zea mays</name>
    <name type="common">Maize</name>
    <dbReference type="NCBI Taxonomy" id="4577"/>
    <lineage>
        <taxon>Eukaryota</taxon>
        <taxon>Viridiplantae</taxon>
        <taxon>Streptophyta</taxon>
        <taxon>Embryophyta</taxon>
        <taxon>Tracheophyta</taxon>
        <taxon>Spermatophyta</taxon>
        <taxon>Magnoliopsida</taxon>
        <taxon>Liliopsida</taxon>
        <taxon>Poales</taxon>
        <taxon>Poaceae</taxon>
        <taxon>PACMAD clade</taxon>
        <taxon>Panicoideae</taxon>
        <taxon>Andropogonodae</taxon>
        <taxon>Andropogoneae</taxon>
        <taxon>Tripsacinae</taxon>
        <taxon>Zea</taxon>
    </lineage>
</organism>
<evidence type="ECO:0000250" key="1"/>
<evidence type="ECO:0000255" key="2"/>
<evidence type="ECO:0000305" key="3"/>
<dbReference type="EMBL" id="AF326484">
    <property type="protein sequence ID" value="AAK26751.1"/>
    <property type="molecule type" value="mRNA"/>
</dbReference>
<dbReference type="EMBL" id="DQ524811">
    <property type="protein sequence ID" value="ABF67956.1"/>
    <property type="molecule type" value="mRNA"/>
</dbReference>
<dbReference type="RefSeq" id="NP_001105637.1">
    <property type="nucleotide sequence ID" value="NM_001112167.1"/>
</dbReference>
<dbReference type="SMR" id="Q19KC1"/>
<dbReference type="FunCoup" id="Q19KC1">
    <property type="interactions" value="19"/>
</dbReference>
<dbReference type="STRING" id="4577.Q19KC1"/>
<dbReference type="TCDB" id="1.A.8.12.13">
    <property type="family name" value="the major intrinsic protein (mip) family"/>
</dbReference>
<dbReference type="PaxDb" id="4577-GRMZM2G028325_P01"/>
<dbReference type="EnsemblPlants" id="Zm00001eb254540_T001">
    <property type="protein sequence ID" value="Zm00001eb254540_P001"/>
    <property type="gene ID" value="Zm00001eb254540"/>
</dbReference>
<dbReference type="GeneID" id="542643"/>
<dbReference type="Gramene" id="Zm00001eb254540_T001">
    <property type="protein sequence ID" value="Zm00001eb254540_P001"/>
    <property type="gene ID" value="Zm00001eb254540"/>
</dbReference>
<dbReference type="KEGG" id="zma:542643"/>
<dbReference type="eggNOG" id="KOG0223">
    <property type="taxonomic scope" value="Eukaryota"/>
</dbReference>
<dbReference type="HOGENOM" id="CLU_020019_3_1_1"/>
<dbReference type="InParanoid" id="Q19KC1"/>
<dbReference type="OMA" id="APSHKDM"/>
<dbReference type="OrthoDB" id="3222at2759"/>
<dbReference type="Proteomes" id="UP000007305">
    <property type="component" value="Chromosome 5"/>
</dbReference>
<dbReference type="ExpressionAtlas" id="Q19KC1">
    <property type="expression patterns" value="baseline and differential"/>
</dbReference>
<dbReference type="GO" id="GO:0016020">
    <property type="term" value="C:membrane"/>
    <property type="evidence" value="ECO:0007669"/>
    <property type="project" value="UniProtKB-SubCell"/>
</dbReference>
<dbReference type="GO" id="GO:0015267">
    <property type="term" value="F:channel activity"/>
    <property type="evidence" value="ECO:0007669"/>
    <property type="project" value="InterPro"/>
</dbReference>
<dbReference type="GO" id="GO:0015840">
    <property type="term" value="P:urea transport"/>
    <property type="evidence" value="ECO:0000314"/>
    <property type="project" value="CACAO"/>
</dbReference>
<dbReference type="CDD" id="cd00333">
    <property type="entry name" value="MIP"/>
    <property type="match status" value="1"/>
</dbReference>
<dbReference type="FunFam" id="1.20.1080.10:FF:000013">
    <property type="entry name" value="Aquaporin NIP2-1"/>
    <property type="match status" value="1"/>
</dbReference>
<dbReference type="Gene3D" id="1.20.1080.10">
    <property type="entry name" value="Glycerol uptake facilitator protein"/>
    <property type="match status" value="1"/>
</dbReference>
<dbReference type="InterPro" id="IPR023271">
    <property type="entry name" value="Aquaporin-like"/>
</dbReference>
<dbReference type="InterPro" id="IPR034294">
    <property type="entry name" value="Aquaporin_transptr"/>
</dbReference>
<dbReference type="InterPro" id="IPR000425">
    <property type="entry name" value="MIP"/>
</dbReference>
<dbReference type="InterPro" id="IPR022357">
    <property type="entry name" value="MIP_CS"/>
</dbReference>
<dbReference type="PANTHER" id="PTHR45724">
    <property type="entry name" value="AQUAPORIN NIP2-1"/>
    <property type="match status" value="1"/>
</dbReference>
<dbReference type="PANTHER" id="PTHR45724:SF16">
    <property type="entry name" value="AQUAPORIN NIP2-1"/>
    <property type="match status" value="1"/>
</dbReference>
<dbReference type="Pfam" id="PF00230">
    <property type="entry name" value="MIP"/>
    <property type="match status" value="1"/>
</dbReference>
<dbReference type="PRINTS" id="PR00783">
    <property type="entry name" value="MINTRINSICP"/>
</dbReference>
<dbReference type="SUPFAM" id="SSF81338">
    <property type="entry name" value="Aquaporin-like"/>
    <property type="match status" value="1"/>
</dbReference>
<dbReference type="PROSITE" id="PS00221">
    <property type="entry name" value="MIP"/>
    <property type="match status" value="1"/>
</dbReference>
<sequence length="295" mass="31761">MSTNSRSNSRANFNNEIHDIGTAQNSSMPPTYYDRSLADIFPPHLLKKVVSEVVSTFLLVFVTCGAAGIYGSDKDRISQLGQSVAGGLIVTVMIYAVGHISGAHMNPAVTLAFAVFRHFPWIQVPFYWAAQFTGSICASFVLKAVLHPIAVLGTTTPTGPHWHSLVIEIIVTFNMMFVTLAVATDTRAVGELAGLAVGSAVCITSIFAGAVSGGSMNPARTLGPALASNLYTGLWIYFLGPVLGTLSGAWTYTYIRFEEAPSHKDMSQKLSSFKLRRLQSQSVAVDDDELDHIQV</sequence>
<accession>Q19KC1</accession>
<accession>Q9ATN3</accession>
<proteinExistence type="evidence at transcript level"/>
<keyword id="KW-0472">Membrane</keyword>
<keyword id="KW-1185">Reference proteome</keyword>
<keyword id="KW-0677">Repeat</keyword>
<keyword id="KW-0812">Transmembrane</keyword>
<keyword id="KW-1133">Transmembrane helix</keyword>
<keyword id="KW-0813">Transport</keyword>
<gene>
    <name type="primary">NIP2-1</name>
    <name type="synonym">LSI1</name>
</gene>
<protein>
    <recommendedName>
        <fullName>Aquaporin NIP2-1</fullName>
    </recommendedName>
    <alternativeName>
        <fullName>NOD26-like intrinsic protein 2-1</fullName>
    </alternativeName>
    <alternativeName>
        <fullName>ZmNIP2-1</fullName>
    </alternativeName>
    <alternativeName>
        <fullName>ZmNIP2;1</fullName>
    </alternativeName>
</protein>
<feature type="chain" id="PRO_0000286030" description="Aquaporin NIP2-1">
    <location>
        <begin position="1"/>
        <end position="295"/>
    </location>
</feature>
<feature type="transmembrane region" description="Helical; Name=1" evidence="2">
    <location>
        <begin position="49"/>
        <end position="69"/>
    </location>
</feature>
<feature type="transmembrane region" description="Helical; Name=2" evidence="2">
    <location>
        <begin position="83"/>
        <end position="103"/>
    </location>
</feature>
<feature type="transmembrane region" description="Helical; Name=3" evidence="2">
    <location>
        <begin position="124"/>
        <end position="146"/>
    </location>
</feature>
<feature type="transmembrane region" description="Helical; Name=4" evidence="2">
    <location>
        <begin position="164"/>
        <end position="184"/>
    </location>
</feature>
<feature type="transmembrane region" description="Helical; Name=5" evidence="2">
    <location>
        <begin position="192"/>
        <end position="212"/>
    </location>
</feature>
<feature type="transmembrane region" description="Helical; Name=6" evidence="2">
    <location>
        <begin position="230"/>
        <end position="250"/>
    </location>
</feature>
<feature type="short sequence motif" description="NPA 1" evidence="1">
    <location>
        <begin position="106"/>
        <end position="108"/>
    </location>
</feature>
<feature type="short sequence motif" description="NPA 2" evidence="1">
    <location>
        <begin position="217"/>
        <end position="219"/>
    </location>
</feature>
<feature type="sequence conflict" description="In Ref. 2; ABF67956." evidence="3" ref="2">
    <original>E</original>
    <variation>D</variation>
    <location>
        <position position="258"/>
    </location>
</feature>
<feature type="sequence conflict" description="In Ref. 2; ABF67956." evidence="3" ref="2">
    <original>HKDM</original>
    <variation>KDPTTSH</variation>
    <location>
        <begin position="263"/>
        <end position="266"/>
    </location>
</feature>
<feature type="sequence conflict" description="In Ref. 2; ABF67956." evidence="3" ref="2">
    <original>VDDDE</original>
    <variation>ADADDDED</variation>
    <location>
        <begin position="285"/>
        <end position="289"/>
    </location>
</feature>
<name>NIP21_MAIZE</name>